<protein>
    <recommendedName>
        <fullName>Probable bifunctional SAT/APS kinase</fullName>
    </recommendedName>
    <domain>
        <recommendedName>
            <fullName>Sulfate adenylyltransferase</fullName>
            <ecNumber>2.7.7.4</ecNumber>
        </recommendedName>
        <alternativeName>
            <fullName>ATP-sulfurylase</fullName>
        </alternativeName>
        <alternativeName>
            <fullName>Sulfate adenylate transferase</fullName>
            <shortName>SAT</shortName>
        </alternativeName>
    </domain>
    <domain>
        <recommendedName>
            <fullName>Adenylyl-sulfate kinase</fullName>
            <ecNumber>2.7.1.25</ecNumber>
        </recommendedName>
        <alternativeName>
            <fullName>APS kinase</fullName>
        </alternativeName>
        <alternativeName>
            <fullName>ATP adenosine-5'-phosphosulfate 3'-phosphotransferase</fullName>
        </alternativeName>
        <alternativeName>
            <fullName>Adenosine-5'-phosphosulfate kinase</fullName>
        </alternativeName>
    </domain>
</protein>
<name>SATC_AQUAE</name>
<comment type="catalytic activity">
    <reaction>
        <text>sulfate + ATP + H(+) = adenosine 5'-phosphosulfate + diphosphate</text>
        <dbReference type="Rhea" id="RHEA:18133"/>
        <dbReference type="ChEBI" id="CHEBI:15378"/>
        <dbReference type="ChEBI" id="CHEBI:16189"/>
        <dbReference type="ChEBI" id="CHEBI:30616"/>
        <dbReference type="ChEBI" id="CHEBI:33019"/>
        <dbReference type="ChEBI" id="CHEBI:58243"/>
        <dbReference type="EC" id="2.7.7.4"/>
    </reaction>
</comment>
<comment type="catalytic activity">
    <reaction>
        <text>adenosine 5'-phosphosulfate + ATP = 3'-phosphoadenylyl sulfate + ADP + H(+)</text>
        <dbReference type="Rhea" id="RHEA:24152"/>
        <dbReference type="ChEBI" id="CHEBI:15378"/>
        <dbReference type="ChEBI" id="CHEBI:30616"/>
        <dbReference type="ChEBI" id="CHEBI:58243"/>
        <dbReference type="ChEBI" id="CHEBI:58339"/>
        <dbReference type="ChEBI" id="CHEBI:456216"/>
        <dbReference type="EC" id="2.7.1.25"/>
    </reaction>
</comment>
<comment type="pathway">
    <text>Sulfur metabolism; hydrogen sulfide biosynthesis; sulfite from sulfate: step 1/3.</text>
</comment>
<comment type="pathway">
    <text>Sulfur metabolism; hydrogen sulfide biosynthesis; sulfite from sulfate: step 2/3.</text>
</comment>
<comment type="similarity">
    <text evidence="3">In the N-terminal section; belongs to the sulfate adenylyltransferase family.</text>
</comment>
<comment type="similarity">
    <text evidence="3">In the C-terminal section; belongs to the APS kinase family.</text>
</comment>
<sequence>MEKIKYLKSIQISQRSVLDLKLLAVGAFTPLDRFMGEEDYRNVVESMRLKSGTLFPIPITLPMEKEIAKDLKEGEWIVLRDPKNVPLAIMRVEEVYKWNLEYEAKNVLGTTDPRHPLVAEMHTWGEYYISGELKVIQLPKYYDFPEYRKTPKQVREEIKSLGLDKIVAFQTRNPMHRVHEELTKRAMEKVGGGLLLHPVVGLTKPGDVDVYTRMRIYKVLYEKYYDKKKTILAFLPLAMRMAGPREALWHGIIRRNYGATHFIVGRDHASPGKDSKGKPFYDPYEAQELFKKYEDEIGIKMVPFEELVYVPELDQYVEINEAKKRNLKYINISGTEIRENFLKQGRKLPEWFTRPEVAEILAETYVPKHKQGFCVWLTGLPCAGKSTIAEILATMLQARGRKVTLLDGDVVRTHLSRGLGFSKEDRITNILRVGFVASEIVKHNGVVICALVSPYRSARNQVRNMMEEGKFIEVFVDAPVEVCEERDVKGLYKKAKEGLIKGFTGVDDPYEPPVAPEVRVDTTKLTPEESALKILEFLKKEGFIKD</sequence>
<keyword id="KW-0002">3D-structure</keyword>
<keyword id="KW-0067">ATP-binding</keyword>
<keyword id="KW-0418">Kinase</keyword>
<keyword id="KW-0511">Multifunctional enzyme</keyword>
<keyword id="KW-0547">Nucleotide-binding</keyword>
<keyword id="KW-0548">Nucleotidyltransferase</keyword>
<keyword id="KW-0597">Phosphoprotein</keyword>
<keyword id="KW-1185">Reference proteome</keyword>
<keyword id="KW-0808">Transferase</keyword>
<dbReference type="EC" id="2.7.7.4"/>
<dbReference type="EC" id="2.7.1.25"/>
<dbReference type="EMBL" id="AE000657">
    <property type="protein sequence ID" value="AAC07134.1"/>
    <property type="molecule type" value="Genomic_DNA"/>
</dbReference>
<dbReference type="PIR" id="C70393">
    <property type="entry name" value="C70393"/>
</dbReference>
<dbReference type="RefSeq" id="NP_213737.1">
    <property type="nucleotide sequence ID" value="NC_000918.1"/>
</dbReference>
<dbReference type="PDB" id="2GKS">
    <property type="method" value="X-ray"/>
    <property type="resolution" value="2.31 A"/>
    <property type="chains" value="A/B=1-546"/>
</dbReference>
<dbReference type="PDBsum" id="2GKS"/>
<dbReference type="SMR" id="O67174"/>
<dbReference type="STRING" id="224324.aq_1081"/>
<dbReference type="EnsemblBacteria" id="AAC07134">
    <property type="protein sequence ID" value="AAC07134"/>
    <property type="gene ID" value="aq_1081"/>
</dbReference>
<dbReference type="KEGG" id="aae:aq_1081"/>
<dbReference type="PATRIC" id="fig|224324.8.peg.841"/>
<dbReference type="eggNOG" id="COG0529">
    <property type="taxonomic scope" value="Bacteria"/>
</dbReference>
<dbReference type="eggNOG" id="COG2046">
    <property type="taxonomic scope" value="Bacteria"/>
</dbReference>
<dbReference type="HOGENOM" id="CLU_022950_0_1_0"/>
<dbReference type="InParanoid" id="O67174"/>
<dbReference type="OrthoDB" id="9804504at2"/>
<dbReference type="BRENDA" id="2.7.1.25">
    <property type="organism ID" value="396"/>
</dbReference>
<dbReference type="BRENDA" id="2.7.7.4">
    <property type="organism ID" value="396"/>
</dbReference>
<dbReference type="UniPathway" id="UPA00140">
    <property type="reaction ID" value="UER00204"/>
</dbReference>
<dbReference type="UniPathway" id="UPA00140">
    <property type="reaction ID" value="UER00205"/>
</dbReference>
<dbReference type="EvolutionaryTrace" id="O67174"/>
<dbReference type="Proteomes" id="UP000000798">
    <property type="component" value="Chromosome"/>
</dbReference>
<dbReference type="GO" id="GO:0004020">
    <property type="term" value="F:adenylylsulfate kinase activity"/>
    <property type="evidence" value="ECO:0007669"/>
    <property type="project" value="UniProtKB-UniRule"/>
</dbReference>
<dbReference type="GO" id="GO:0005524">
    <property type="term" value="F:ATP binding"/>
    <property type="evidence" value="ECO:0007669"/>
    <property type="project" value="UniProtKB-UniRule"/>
</dbReference>
<dbReference type="GO" id="GO:0004781">
    <property type="term" value="F:sulfate adenylyltransferase (ATP) activity"/>
    <property type="evidence" value="ECO:0000318"/>
    <property type="project" value="GO_Central"/>
</dbReference>
<dbReference type="GO" id="GO:0070814">
    <property type="term" value="P:hydrogen sulfide biosynthetic process"/>
    <property type="evidence" value="ECO:0007669"/>
    <property type="project" value="UniProtKB-UniRule"/>
</dbReference>
<dbReference type="GO" id="GO:0019379">
    <property type="term" value="P:sulfate assimilation, phosphoadenylyl sulfate reduction by phosphoadenylyl-sulfate reductase (thioredoxin)"/>
    <property type="evidence" value="ECO:0000318"/>
    <property type="project" value="GO_Central"/>
</dbReference>
<dbReference type="CDD" id="cd02027">
    <property type="entry name" value="APSK"/>
    <property type="match status" value="1"/>
</dbReference>
<dbReference type="CDD" id="cd00517">
    <property type="entry name" value="ATPS"/>
    <property type="match status" value="1"/>
</dbReference>
<dbReference type="FunFam" id="3.10.400.10:FF:000008">
    <property type="entry name" value="Probable bifunctional SAT/APS kinase"/>
    <property type="match status" value="1"/>
</dbReference>
<dbReference type="FunFam" id="3.40.50.300:FF:000802">
    <property type="entry name" value="Sulfate adenylyltransferase"/>
    <property type="match status" value="1"/>
</dbReference>
<dbReference type="FunFam" id="3.40.50.620:FF:000052">
    <property type="entry name" value="Sulfate adenylyltransferase"/>
    <property type="match status" value="1"/>
</dbReference>
<dbReference type="Gene3D" id="3.40.50.620">
    <property type="entry name" value="HUPs"/>
    <property type="match status" value="1"/>
</dbReference>
<dbReference type="Gene3D" id="3.40.50.300">
    <property type="entry name" value="P-loop containing nucleotide triphosphate hydrolases"/>
    <property type="match status" value="1"/>
</dbReference>
<dbReference type="Gene3D" id="3.10.400.10">
    <property type="entry name" value="Sulfate adenylyltransferase"/>
    <property type="match status" value="1"/>
</dbReference>
<dbReference type="HAMAP" id="MF_00065">
    <property type="entry name" value="Adenylyl_sulf_kinase"/>
    <property type="match status" value="1"/>
</dbReference>
<dbReference type="HAMAP" id="MF_00066">
    <property type="entry name" value="Sulf_adenylyltr"/>
    <property type="match status" value="1"/>
</dbReference>
<dbReference type="InterPro" id="IPR002891">
    <property type="entry name" value="APS_kinase"/>
</dbReference>
<dbReference type="InterPro" id="IPR025980">
    <property type="entry name" value="ATP-Sase_PUA-like_dom"/>
</dbReference>
<dbReference type="InterPro" id="IPR027417">
    <property type="entry name" value="P-loop_NTPase"/>
</dbReference>
<dbReference type="InterPro" id="IPR015947">
    <property type="entry name" value="PUA-like_sf"/>
</dbReference>
<dbReference type="InterPro" id="IPR014729">
    <property type="entry name" value="Rossmann-like_a/b/a_fold"/>
</dbReference>
<dbReference type="InterPro" id="IPR020792">
    <property type="entry name" value="SO4_adenylyltransferase_pro"/>
</dbReference>
<dbReference type="InterPro" id="IPR050512">
    <property type="entry name" value="Sulf_AdTrans/APS_kinase"/>
</dbReference>
<dbReference type="InterPro" id="IPR024951">
    <property type="entry name" value="Sulfurylase_cat_dom"/>
</dbReference>
<dbReference type="InterPro" id="IPR002650">
    <property type="entry name" value="Sulphate_adenylyltransferase"/>
</dbReference>
<dbReference type="NCBIfam" id="TIGR00455">
    <property type="entry name" value="apsK"/>
    <property type="match status" value="1"/>
</dbReference>
<dbReference type="NCBIfam" id="NF003013">
    <property type="entry name" value="PRK03846.1"/>
    <property type="match status" value="1"/>
</dbReference>
<dbReference type="NCBIfam" id="NF003166">
    <property type="entry name" value="PRK04149.1"/>
    <property type="match status" value="1"/>
</dbReference>
<dbReference type="NCBIfam" id="NF004040">
    <property type="entry name" value="PRK05537.1"/>
    <property type="match status" value="1"/>
</dbReference>
<dbReference type="NCBIfam" id="TIGR00339">
    <property type="entry name" value="sopT"/>
    <property type="match status" value="1"/>
</dbReference>
<dbReference type="PANTHER" id="PTHR42700:SF3">
    <property type="entry name" value="BIFUNCTIONAL SAT_APS KINASE-RELATED"/>
    <property type="match status" value="1"/>
</dbReference>
<dbReference type="PANTHER" id="PTHR42700">
    <property type="entry name" value="SULFATE ADENYLYLTRANSFERASE"/>
    <property type="match status" value="1"/>
</dbReference>
<dbReference type="Pfam" id="PF01583">
    <property type="entry name" value="APS_kinase"/>
    <property type="match status" value="1"/>
</dbReference>
<dbReference type="Pfam" id="PF01747">
    <property type="entry name" value="ATP-sulfurylase"/>
    <property type="match status" value="1"/>
</dbReference>
<dbReference type="Pfam" id="PF14306">
    <property type="entry name" value="PUA_2"/>
    <property type="match status" value="1"/>
</dbReference>
<dbReference type="SUPFAM" id="SSF52374">
    <property type="entry name" value="Nucleotidylyl transferase"/>
    <property type="match status" value="1"/>
</dbReference>
<dbReference type="SUPFAM" id="SSF52540">
    <property type="entry name" value="P-loop containing nucleoside triphosphate hydrolases"/>
    <property type="match status" value="1"/>
</dbReference>
<dbReference type="SUPFAM" id="SSF88697">
    <property type="entry name" value="PUA domain-like"/>
    <property type="match status" value="1"/>
</dbReference>
<proteinExistence type="evidence at protein level"/>
<evidence type="ECO:0000250" key="1"/>
<evidence type="ECO:0000255" key="2"/>
<evidence type="ECO:0000305" key="3"/>
<evidence type="ECO:0007829" key="4">
    <source>
        <dbReference type="PDB" id="2GKS"/>
    </source>
</evidence>
<feature type="chain" id="PRO_0000105948" description="Probable bifunctional SAT/APS kinase">
    <location>
        <begin position="1"/>
        <end position="546"/>
    </location>
</feature>
<feature type="region of interest" description="Sulfate adenylyltransferase">
    <location>
        <begin position="1"/>
        <end position="370"/>
    </location>
</feature>
<feature type="region of interest" description="Adenylsulfate kinase">
    <location>
        <begin position="371"/>
        <end position="546"/>
    </location>
</feature>
<feature type="active site" description="Phosphoserine intermediate" evidence="1">
    <location>
        <position position="453"/>
    </location>
</feature>
<feature type="binding site" evidence="2">
    <location>
        <begin position="379"/>
        <end position="386"/>
    </location>
    <ligand>
        <name>ATP</name>
        <dbReference type="ChEBI" id="CHEBI:30616"/>
    </ligand>
</feature>
<feature type="strand" evidence="4">
    <location>
        <begin position="6"/>
        <end position="11"/>
    </location>
</feature>
<feature type="helix" evidence="4">
    <location>
        <begin position="14"/>
        <end position="24"/>
    </location>
</feature>
<feature type="turn" evidence="4">
    <location>
        <begin position="25"/>
        <end position="30"/>
    </location>
</feature>
<feature type="helix" evidence="4">
    <location>
        <begin position="37"/>
        <end position="46"/>
    </location>
</feature>
<feature type="strand" evidence="4">
    <location>
        <begin position="61"/>
        <end position="63"/>
    </location>
</feature>
<feature type="helix" evidence="4">
    <location>
        <begin position="65"/>
        <end position="68"/>
    </location>
</feature>
<feature type="strand" evidence="4">
    <location>
        <begin position="76"/>
        <end position="80"/>
    </location>
</feature>
<feature type="strand" evidence="4">
    <location>
        <begin position="86"/>
        <end position="91"/>
    </location>
</feature>
<feature type="strand" evidence="4">
    <location>
        <begin position="94"/>
        <end position="97"/>
    </location>
</feature>
<feature type="helix" evidence="4">
    <location>
        <begin position="100"/>
        <end position="108"/>
    </location>
</feature>
<feature type="helix" evidence="4">
    <location>
        <begin position="116"/>
        <end position="121"/>
    </location>
</feature>
<feature type="strand" evidence="4">
    <location>
        <begin position="126"/>
        <end position="130"/>
    </location>
</feature>
<feature type="strand" evidence="4">
    <location>
        <begin position="133"/>
        <end position="136"/>
    </location>
</feature>
<feature type="helix" evidence="4">
    <location>
        <begin position="145"/>
        <end position="147"/>
    </location>
</feature>
<feature type="helix" evidence="4">
    <location>
        <begin position="151"/>
        <end position="161"/>
    </location>
</feature>
<feature type="strand" evidence="4">
    <location>
        <begin position="166"/>
        <end position="169"/>
    </location>
</feature>
<feature type="helix" evidence="4">
    <location>
        <begin position="177"/>
        <end position="190"/>
    </location>
</feature>
<feature type="strand" evidence="4">
    <location>
        <begin position="192"/>
        <end position="196"/>
    </location>
</feature>
<feature type="helix" evidence="4">
    <location>
        <begin position="210"/>
        <end position="224"/>
    </location>
</feature>
<feature type="turn" evidence="4">
    <location>
        <begin position="227"/>
        <end position="229"/>
    </location>
</feature>
<feature type="strand" evidence="4">
    <location>
        <begin position="230"/>
        <end position="232"/>
    </location>
</feature>
<feature type="helix" evidence="4">
    <location>
        <begin position="244"/>
        <end position="256"/>
    </location>
</feature>
<feature type="strand" evidence="4">
    <location>
        <begin position="260"/>
        <end position="264"/>
    </location>
</feature>
<feature type="turn" evidence="4">
    <location>
        <begin position="266"/>
        <end position="269"/>
    </location>
</feature>
<feature type="strand" evidence="4">
    <location>
        <begin position="279"/>
        <end position="281"/>
    </location>
</feature>
<feature type="helix" evidence="4">
    <location>
        <begin position="285"/>
        <end position="297"/>
    </location>
</feature>
<feature type="strand" evidence="4">
    <location>
        <begin position="300"/>
        <end position="303"/>
    </location>
</feature>
<feature type="turn" evidence="4">
    <location>
        <begin position="311"/>
        <end position="313"/>
    </location>
</feature>
<feature type="strand" evidence="4">
    <location>
        <begin position="314"/>
        <end position="317"/>
    </location>
</feature>
<feature type="helix" evidence="4">
    <location>
        <begin position="339"/>
        <end position="342"/>
    </location>
</feature>
<feature type="turn" evidence="4">
    <location>
        <begin position="343"/>
        <end position="345"/>
    </location>
</feature>
<feature type="turn" evidence="4">
    <location>
        <begin position="350"/>
        <end position="352"/>
    </location>
</feature>
<feature type="helix" evidence="4">
    <location>
        <begin position="355"/>
        <end position="364"/>
    </location>
</feature>
<feature type="helix" evidence="4">
    <location>
        <begin position="368"/>
        <end position="370"/>
    </location>
</feature>
<feature type="strand" evidence="4">
    <location>
        <begin position="373"/>
        <end position="378"/>
    </location>
</feature>
<feature type="helix" evidence="4">
    <location>
        <begin position="385"/>
        <end position="398"/>
    </location>
</feature>
<feature type="strand" evidence="4">
    <location>
        <begin position="403"/>
        <end position="406"/>
    </location>
</feature>
<feature type="helix" evidence="4">
    <location>
        <begin position="408"/>
        <end position="414"/>
    </location>
</feature>
<feature type="helix" evidence="4">
    <location>
        <begin position="423"/>
        <end position="442"/>
    </location>
</feature>
<feature type="strand" evidence="4">
    <location>
        <begin position="446"/>
        <end position="450"/>
    </location>
</feature>
<feature type="helix" evidence="4">
    <location>
        <begin position="456"/>
        <end position="463"/>
    </location>
</feature>
<feature type="strand" evidence="4">
    <location>
        <begin position="471"/>
        <end position="477"/>
    </location>
</feature>
<feature type="helix" evidence="4">
    <location>
        <begin position="480"/>
        <end position="482"/>
    </location>
</feature>
<feature type="helix" evidence="4">
    <location>
        <begin position="483"/>
        <end position="486"/>
    </location>
</feature>
<feature type="helix" evidence="4">
    <location>
        <begin position="491"/>
        <end position="494"/>
    </location>
</feature>
<feature type="turn" evidence="4">
    <location>
        <begin position="505"/>
        <end position="507"/>
    </location>
</feature>
<feature type="strand" evidence="4">
    <location>
        <begin position="517"/>
        <end position="521"/>
    </location>
</feature>
<feature type="turn" evidence="4">
    <location>
        <begin position="522"/>
        <end position="524"/>
    </location>
</feature>
<feature type="helix" evidence="4">
    <location>
        <begin position="527"/>
        <end position="540"/>
    </location>
</feature>
<organism>
    <name type="scientific">Aquifex aeolicus (strain VF5)</name>
    <dbReference type="NCBI Taxonomy" id="224324"/>
    <lineage>
        <taxon>Bacteria</taxon>
        <taxon>Pseudomonadati</taxon>
        <taxon>Aquificota</taxon>
        <taxon>Aquificia</taxon>
        <taxon>Aquificales</taxon>
        <taxon>Aquificaceae</taxon>
        <taxon>Aquifex</taxon>
    </lineage>
</organism>
<accession>O67174</accession>
<reference key="1">
    <citation type="journal article" date="1998" name="Nature">
        <title>The complete genome of the hyperthermophilic bacterium Aquifex aeolicus.</title>
        <authorList>
            <person name="Deckert G."/>
            <person name="Warren P.V."/>
            <person name="Gaasterland T."/>
            <person name="Young W.G."/>
            <person name="Lenox A.L."/>
            <person name="Graham D.E."/>
            <person name="Overbeek R."/>
            <person name="Snead M.A."/>
            <person name="Keller M."/>
            <person name="Aujay M."/>
            <person name="Huber R."/>
            <person name="Feldman R.A."/>
            <person name="Short J.M."/>
            <person name="Olsen G.J."/>
            <person name="Swanson R.V."/>
        </authorList>
    </citation>
    <scope>NUCLEOTIDE SEQUENCE [LARGE SCALE GENOMIC DNA]</scope>
    <source>
        <strain>VF5</strain>
    </source>
</reference>
<gene>
    <name type="primary">sat/cysC</name>
    <name type="ordered locus">aq_1081</name>
</gene>